<keyword id="KW-0963">Cytoplasm</keyword>
<keyword id="KW-0251">Elongation factor</keyword>
<keyword id="KW-0648">Protein biosynthesis</keyword>
<keyword id="KW-1185">Reference proteome</keyword>
<accession>Q1AW67</accession>
<dbReference type="EMBL" id="CP000386">
    <property type="protein sequence ID" value="ABG04361.1"/>
    <property type="status" value="ALT_INIT"/>
    <property type="molecule type" value="Genomic_DNA"/>
</dbReference>
<dbReference type="RefSeq" id="WP_041328178.1">
    <property type="nucleotide sequence ID" value="NC_008148.1"/>
</dbReference>
<dbReference type="SMR" id="Q1AW67"/>
<dbReference type="STRING" id="266117.Rxyl_1399"/>
<dbReference type="KEGG" id="rxy:Rxyl_1399"/>
<dbReference type="eggNOG" id="COG0264">
    <property type="taxonomic scope" value="Bacteria"/>
</dbReference>
<dbReference type="HOGENOM" id="CLU_047155_1_1_11"/>
<dbReference type="Proteomes" id="UP000006637">
    <property type="component" value="Chromosome"/>
</dbReference>
<dbReference type="GO" id="GO:0005737">
    <property type="term" value="C:cytoplasm"/>
    <property type="evidence" value="ECO:0007669"/>
    <property type="project" value="UniProtKB-SubCell"/>
</dbReference>
<dbReference type="GO" id="GO:0003746">
    <property type="term" value="F:translation elongation factor activity"/>
    <property type="evidence" value="ECO:0007669"/>
    <property type="project" value="UniProtKB-UniRule"/>
</dbReference>
<dbReference type="CDD" id="cd14275">
    <property type="entry name" value="UBA_EF-Ts"/>
    <property type="match status" value="1"/>
</dbReference>
<dbReference type="FunFam" id="1.10.286.20:FF:000001">
    <property type="entry name" value="Elongation factor Ts"/>
    <property type="match status" value="1"/>
</dbReference>
<dbReference type="FunFam" id="1.10.8.10:FF:000001">
    <property type="entry name" value="Elongation factor Ts"/>
    <property type="match status" value="1"/>
</dbReference>
<dbReference type="Gene3D" id="1.10.286.20">
    <property type="match status" value="1"/>
</dbReference>
<dbReference type="Gene3D" id="1.10.8.10">
    <property type="entry name" value="DNA helicase RuvA subunit, C-terminal domain"/>
    <property type="match status" value="1"/>
</dbReference>
<dbReference type="Gene3D" id="3.30.479.20">
    <property type="entry name" value="Elongation factor Ts, dimerisation domain"/>
    <property type="match status" value="1"/>
</dbReference>
<dbReference type="HAMAP" id="MF_00050">
    <property type="entry name" value="EF_Ts"/>
    <property type="match status" value="1"/>
</dbReference>
<dbReference type="InterPro" id="IPR036402">
    <property type="entry name" value="EF-Ts_dimer_sf"/>
</dbReference>
<dbReference type="InterPro" id="IPR001816">
    <property type="entry name" value="Transl_elong_EFTs/EF1B"/>
</dbReference>
<dbReference type="InterPro" id="IPR014039">
    <property type="entry name" value="Transl_elong_EFTs/EF1B_dimer"/>
</dbReference>
<dbReference type="InterPro" id="IPR018101">
    <property type="entry name" value="Transl_elong_Ts_CS"/>
</dbReference>
<dbReference type="InterPro" id="IPR009060">
    <property type="entry name" value="UBA-like_sf"/>
</dbReference>
<dbReference type="PANTHER" id="PTHR11741">
    <property type="entry name" value="ELONGATION FACTOR TS"/>
    <property type="match status" value="1"/>
</dbReference>
<dbReference type="PANTHER" id="PTHR11741:SF0">
    <property type="entry name" value="ELONGATION FACTOR TS, MITOCHONDRIAL"/>
    <property type="match status" value="1"/>
</dbReference>
<dbReference type="Pfam" id="PF00889">
    <property type="entry name" value="EF_TS"/>
    <property type="match status" value="1"/>
</dbReference>
<dbReference type="SUPFAM" id="SSF54713">
    <property type="entry name" value="Elongation factor Ts (EF-Ts), dimerisation domain"/>
    <property type="match status" value="1"/>
</dbReference>
<dbReference type="SUPFAM" id="SSF46934">
    <property type="entry name" value="UBA-like"/>
    <property type="match status" value="1"/>
</dbReference>
<dbReference type="PROSITE" id="PS01127">
    <property type="entry name" value="EF_TS_2"/>
    <property type="match status" value="1"/>
</dbReference>
<organism>
    <name type="scientific">Rubrobacter xylanophilus (strain DSM 9941 / JCM 11954 / NBRC 16129 / PRD-1)</name>
    <dbReference type="NCBI Taxonomy" id="266117"/>
    <lineage>
        <taxon>Bacteria</taxon>
        <taxon>Bacillati</taxon>
        <taxon>Actinomycetota</taxon>
        <taxon>Rubrobacteria</taxon>
        <taxon>Rubrobacterales</taxon>
        <taxon>Rubrobacteraceae</taxon>
        <taxon>Rubrobacter</taxon>
    </lineage>
</organism>
<sequence length="195" mass="22024">MATQIEKIKQLREETAAGMMDVKRALEESGGDLDGARRILKERGQAIAAKKSRRETHEGRIEAYVHFNGRVGVLVEVNCETDFVARTPEFREFCRDIALHIASMKPLCVAPEDVPEEALAEEREIAEKQAAEMGKPEHITRQIVEGRLKKWVSEQALLTQPFAKDPGKTVGELLQETVSKVGENVVIRRFVRYEL</sequence>
<name>EFTS_RUBXD</name>
<feature type="chain" id="PRO_0000323464" description="Elongation factor Ts">
    <location>
        <begin position="1"/>
        <end position="195"/>
    </location>
</feature>
<feature type="region of interest" description="Involved in Mg(2+) ion dislocation from EF-Tu" evidence="1">
    <location>
        <begin position="81"/>
        <end position="84"/>
    </location>
</feature>
<gene>
    <name evidence="1" type="primary">tsf</name>
    <name type="ordered locus">Rxyl_1399</name>
</gene>
<comment type="function">
    <text evidence="1">Associates with the EF-Tu.GDP complex and induces the exchange of GDP to GTP. It remains bound to the aminoacyl-tRNA.EF-Tu.GTP complex up to the GTP hydrolysis stage on the ribosome.</text>
</comment>
<comment type="subcellular location">
    <subcellularLocation>
        <location evidence="1">Cytoplasm</location>
    </subcellularLocation>
</comment>
<comment type="similarity">
    <text evidence="1">Belongs to the EF-Ts family.</text>
</comment>
<comment type="sequence caution" evidence="2">
    <conflict type="erroneous initiation">
        <sequence resource="EMBL-CDS" id="ABG04361"/>
    </conflict>
</comment>
<proteinExistence type="inferred from homology"/>
<evidence type="ECO:0000255" key="1">
    <source>
        <dbReference type="HAMAP-Rule" id="MF_00050"/>
    </source>
</evidence>
<evidence type="ECO:0000305" key="2"/>
<protein>
    <recommendedName>
        <fullName evidence="1">Elongation factor Ts</fullName>
        <shortName evidence="1">EF-Ts</shortName>
    </recommendedName>
</protein>
<reference key="1">
    <citation type="submission" date="2006-06" db="EMBL/GenBank/DDBJ databases">
        <title>Complete sequence of Rubrobacter xylanophilus DSM 9941.</title>
        <authorList>
            <consortium name="US DOE Joint Genome Institute"/>
            <person name="Copeland A."/>
            <person name="Lucas S."/>
            <person name="Lapidus A."/>
            <person name="Barry K."/>
            <person name="Detter J.C."/>
            <person name="Glavina del Rio T."/>
            <person name="Hammon N."/>
            <person name="Israni S."/>
            <person name="Dalin E."/>
            <person name="Tice H."/>
            <person name="Pitluck S."/>
            <person name="Munk A.C."/>
            <person name="Brettin T."/>
            <person name="Bruce D."/>
            <person name="Han C."/>
            <person name="Tapia R."/>
            <person name="Gilna P."/>
            <person name="Schmutz J."/>
            <person name="Larimer F."/>
            <person name="Land M."/>
            <person name="Hauser L."/>
            <person name="Kyrpides N."/>
            <person name="Lykidis A."/>
            <person name="da Costa M.S."/>
            <person name="Rainey F.A."/>
            <person name="Empadinhas N."/>
            <person name="Jolivet E."/>
            <person name="Battista J.R."/>
            <person name="Richardson P."/>
        </authorList>
    </citation>
    <scope>NUCLEOTIDE SEQUENCE [LARGE SCALE GENOMIC DNA]</scope>
    <source>
        <strain>DSM 9941 / JCM 11954 / NBRC 16129 / PRD-1</strain>
    </source>
</reference>